<evidence type="ECO:0000255" key="1">
    <source>
        <dbReference type="HAMAP-Rule" id="MF_00036"/>
    </source>
</evidence>
<dbReference type="EC" id="6.1.1.7" evidence="1"/>
<dbReference type="EMBL" id="CP001091">
    <property type="protein sequence ID" value="ACE61346.1"/>
    <property type="molecule type" value="Genomic_DNA"/>
</dbReference>
<dbReference type="RefSeq" id="WP_005617147.1">
    <property type="nucleotide sequence ID" value="NC_010939.1"/>
</dbReference>
<dbReference type="SMR" id="B3H177"/>
<dbReference type="KEGG" id="apa:APP7_0694"/>
<dbReference type="HOGENOM" id="CLU_004485_1_1_6"/>
<dbReference type="Proteomes" id="UP000001226">
    <property type="component" value="Chromosome"/>
</dbReference>
<dbReference type="GO" id="GO:0005829">
    <property type="term" value="C:cytosol"/>
    <property type="evidence" value="ECO:0007669"/>
    <property type="project" value="TreeGrafter"/>
</dbReference>
<dbReference type="GO" id="GO:0004813">
    <property type="term" value="F:alanine-tRNA ligase activity"/>
    <property type="evidence" value="ECO:0007669"/>
    <property type="project" value="UniProtKB-UniRule"/>
</dbReference>
<dbReference type="GO" id="GO:0002161">
    <property type="term" value="F:aminoacyl-tRNA deacylase activity"/>
    <property type="evidence" value="ECO:0007669"/>
    <property type="project" value="TreeGrafter"/>
</dbReference>
<dbReference type="GO" id="GO:0005524">
    <property type="term" value="F:ATP binding"/>
    <property type="evidence" value="ECO:0007669"/>
    <property type="project" value="UniProtKB-UniRule"/>
</dbReference>
<dbReference type="GO" id="GO:0000049">
    <property type="term" value="F:tRNA binding"/>
    <property type="evidence" value="ECO:0007669"/>
    <property type="project" value="UniProtKB-KW"/>
</dbReference>
<dbReference type="GO" id="GO:0008270">
    <property type="term" value="F:zinc ion binding"/>
    <property type="evidence" value="ECO:0007669"/>
    <property type="project" value="UniProtKB-UniRule"/>
</dbReference>
<dbReference type="GO" id="GO:0006419">
    <property type="term" value="P:alanyl-tRNA aminoacylation"/>
    <property type="evidence" value="ECO:0007669"/>
    <property type="project" value="UniProtKB-UniRule"/>
</dbReference>
<dbReference type="GO" id="GO:0045892">
    <property type="term" value="P:negative regulation of DNA-templated transcription"/>
    <property type="evidence" value="ECO:0007669"/>
    <property type="project" value="TreeGrafter"/>
</dbReference>
<dbReference type="CDD" id="cd00673">
    <property type="entry name" value="AlaRS_core"/>
    <property type="match status" value="1"/>
</dbReference>
<dbReference type="FunFam" id="2.40.30.130:FF:000001">
    <property type="entry name" value="Alanine--tRNA ligase"/>
    <property type="match status" value="1"/>
</dbReference>
<dbReference type="FunFam" id="3.10.310.40:FF:000001">
    <property type="entry name" value="Alanine--tRNA ligase"/>
    <property type="match status" value="1"/>
</dbReference>
<dbReference type="FunFam" id="3.30.54.20:FF:000001">
    <property type="entry name" value="Alanine--tRNA ligase"/>
    <property type="match status" value="1"/>
</dbReference>
<dbReference type="FunFam" id="3.30.930.10:FF:000004">
    <property type="entry name" value="Alanine--tRNA ligase"/>
    <property type="match status" value="1"/>
</dbReference>
<dbReference type="FunFam" id="3.30.980.10:FF:000004">
    <property type="entry name" value="Alanine--tRNA ligase, cytoplasmic"/>
    <property type="match status" value="1"/>
</dbReference>
<dbReference type="Gene3D" id="2.40.30.130">
    <property type="match status" value="1"/>
</dbReference>
<dbReference type="Gene3D" id="3.10.310.40">
    <property type="match status" value="1"/>
</dbReference>
<dbReference type="Gene3D" id="3.30.54.20">
    <property type="match status" value="1"/>
</dbReference>
<dbReference type="Gene3D" id="6.10.250.550">
    <property type="match status" value="1"/>
</dbReference>
<dbReference type="Gene3D" id="3.30.930.10">
    <property type="entry name" value="Bira Bifunctional Protein, Domain 2"/>
    <property type="match status" value="1"/>
</dbReference>
<dbReference type="Gene3D" id="3.30.980.10">
    <property type="entry name" value="Threonyl-trna Synthetase, Chain A, domain 2"/>
    <property type="match status" value="1"/>
</dbReference>
<dbReference type="HAMAP" id="MF_00036_B">
    <property type="entry name" value="Ala_tRNA_synth_B"/>
    <property type="match status" value="1"/>
</dbReference>
<dbReference type="InterPro" id="IPR045864">
    <property type="entry name" value="aa-tRNA-synth_II/BPL/LPL"/>
</dbReference>
<dbReference type="InterPro" id="IPR002318">
    <property type="entry name" value="Ala-tRNA-lgiase_IIc"/>
</dbReference>
<dbReference type="InterPro" id="IPR018162">
    <property type="entry name" value="Ala-tRNA-ligase_IIc_anticod-bd"/>
</dbReference>
<dbReference type="InterPro" id="IPR018165">
    <property type="entry name" value="Ala-tRNA-synth_IIc_core"/>
</dbReference>
<dbReference type="InterPro" id="IPR018164">
    <property type="entry name" value="Ala-tRNA-synth_IIc_N"/>
</dbReference>
<dbReference type="InterPro" id="IPR050058">
    <property type="entry name" value="Ala-tRNA_ligase"/>
</dbReference>
<dbReference type="InterPro" id="IPR023033">
    <property type="entry name" value="Ala_tRNA_ligase_euk/bac"/>
</dbReference>
<dbReference type="InterPro" id="IPR003156">
    <property type="entry name" value="DHHA1_dom"/>
</dbReference>
<dbReference type="InterPro" id="IPR018163">
    <property type="entry name" value="Thr/Ala-tRNA-synth_IIc_edit"/>
</dbReference>
<dbReference type="InterPro" id="IPR009000">
    <property type="entry name" value="Transl_B-barrel_sf"/>
</dbReference>
<dbReference type="InterPro" id="IPR012947">
    <property type="entry name" value="tRNA_SAD"/>
</dbReference>
<dbReference type="NCBIfam" id="TIGR00344">
    <property type="entry name" value="alaS"/>
    <property type="match status" value="1"/>
</dbReference>
<dbReference type="PANTHER" id="PTHR11777:SF9">
    <property type="entry name" value="ALANINE--TRNA LIGASE, CYTOPLASMIC"/>
    <property type="match status" value="1"/>
</dbReference>
<dbReference type="PANTHER" id="PTHR11777">
    <property type="entry name" value="ALANYL-TRNA SYNTHETASE"/>
    <property type="match status" value="1"/>
</dbReference>
<dbReference type="Pfam" id="PF02272">
    <property type="entry name" value="DHHA1"/>
    <property type="match status" value="1"/>
</dbReference>
<dbReference type="Pfam" id="PF01411">
    <property type="entry name" value="tRNA-synt_2c"/>
    <property type="match status" value="1"/>
</dbReference>
<dbReference type="Pfam" id="PF07973">
    <property type="entry name" value="tRNA_SAD"/>
    <property type="match status" value="1"/>
</dbReference>
<dbReference type="PRINTS" id="PR00980">
    <property type="entry name" value="TRNASYNTHALA"/>
</dbReference>
<dbReference type="SMART" id="SM00863">
    <property type="entry name" value="tRNA_SAD"/>
    <property type="match status" value="1"/>
</dbReference>
<dbReference type="SUPFAM" id="SSF55681">
    <property type="entry name" value="Class II aaRS and biotin synthetases"/>
    <property type="match status" value="1"/>
</dbReference>
<dbReference type="SUPFAM" id="SSF101353">
    <property type="entry name" value="Putative anticodon-binding domain of alanyl-tRNA synthetase (AlaRS)"/>
    <property type="match status" value="1"/>
</dbReference>
<dbReference type="SUPFAM" id="SSF55186">
    <property type="entry name" value="ThrRS/AlaRS common domain"/>
    <property type="match status" value="1"/>
</dbReference>
<dbReference type="SUPFAM" id="SSF50447">
    <property type="entry name" value="Translation proteins"/>
    <property type="match status" value="1"/>
</dbReference>
<dbReference type="PROSITE" id="PS50860">
    <property type="entry name" value="AA_TRNA_LIGASE_II_ALA"/>
    <property type="match status" value="1"/>
</dbReference>
<protein>
    <recommendedName>
        <fullName evidence="1">Alanine--tRNA ligase</fullName>
        <ecNumber evidence="1">6.1.1.7</ecNumber>
    </recommendedName>
    <alternativeName>
        <fullName evidence="1">Alanyl-tRNA synthetase</fullName>
        <shortName evidence="1">AlaRS</shortName>
    </alternativeName>
</protein>
<gene>
    <name evidence="1" type="primary">alaS</name>
    <name type="ordered locus">APP7_0694</name>
</gene>
<keyword id="KW-0030">Aminoacyl-tRNA synthetase</keyword>
<keyword id="KW-0067">ATP-binding</keyword>
<keyword id="KW-0963">Cytoplasm</keyword>
<keyword id="KW-0436">Ligase</keyword>
<keyword id="KW-0479">Metal-binding</keyword>
<keyword id="KW-0547">Nucleotide-binding</keyword>
<keyword id="KW-0648">Protein biosynthesis</keyword>
<keyword id="KW-0694">RNA-binding</keyword>
<keyword id="KW-0820">tRNA-binding</keyword>
<keyword id="KW-0862">Zinc</keyword>
<organism>
    <name type="scientific">Actinobacillus pleuropneumoniae serotype 7 (strain AP76)</name>
    <dbReference type="NCBI Taxonomy" id="537457"/>
    <lineage>
        <taxon>Bacteria</taxon>
        <taxon>Pseudomonadati</taxon>
        <taxon>Pseudomonadota</taxon>
        <taxon>Gammaproteobacteria</taxon>
        <taxon>Pasteurellales</taxon>
        <taxon>Pasteurellaceae</taxon>
        <taxon>Actinobacillus</taxon>
    </lineage>
</organism>
<reference key="1">
    <citation type="submission" date="2008-06" db="EMBL/GenBank/DDBJ databases">
        <title>Genome and proteome analysis of A. pleuropneumoniae serotype 7.</title>
        <authorList>
            <person name="Linke B."/>
            <person name="Buettner F."/>
            <person name="Martinez-Arias R."/>
            <person name="Goesmann A."/>
            <person name="Baltes N."/>
            <person name="Tegetmeyer H."/>
            <person name="Singh M."/>
            <person name="Gerlach G.F."/>
        </authorList>
    </citation>
    <scope>NUCLEOTIDE SEQUENCE [LARGE SCALE GENOMIC DNA]</scope>
    <source>
        <strain>AP76</strain>
    </source>
</reference>
<sequence length="874" mass="96230">MKTTSEIRQSFLDFFHSKGHTVVPSSSLVPENDPTLLFTNAGMNQFKDVFLGLEKRPYTRATTAQRCVRAGGKHNDLENVGYTARHHTFFEMMGNFSFGDYFKHDAIQFGWEYLTSPQWLGLPKEKLYVTVYETDDEAYDIWNKIVGVPTDHIIRIGDNKGAPYASDNFWAMGDTGPCGPCTEIFYDHGETFWGGLPGSPEEDGDRYIEVWNIVFMQFNRLADGTMEKLPKPSVDTGMGLERMTAVMQHVNSNYETDIFQTLIKEVAGLLNVTDLDNKSLRVVADHIRACSYLIADGVVPSNEGRGYVLRRIIRRAVRHGNLLGAKEAFFYKLVPTLATVMGHAGEVLTQKQAHIQKTLKAEEEQFARTLERGLALLEDALTKVENNTLSGEVAFKLYDTYGFPLDLTADVCREREITIDEAGFEAEMTAQRERAKASSNFGADYNNVIKVEGQTDFIGYDNLAAQATIVGLFSNGKAVDTIQSGESAVIILDQTPFYAEMGGQVGDSGLISTEICNFAVNDTQKYGQVFGHIGQLTSGSLSIGDKVTATVDATRRVAITANHSATHLLHSALREVLGDHVAQKGSLVSENILRFDFSQPEAISKSQLEEIERIVNRKIRENIQVTIETMDIESAKKKGAMALFGEKYGDVVRVVGMTEFSIELCGGTHVQRTGDIGLFKLVSEGAVAAGIRRVEAVTAETAIEWLHNQQKVLQQSAEFLKADSNSLVEKIQQLQDKAKRTEKELQQLKDKLAAQAGSELVKQANKINGVNVVVQKLENVEVKSLRTMVDDLKNQLESAIVVFGTVADEKVNLIVGVTKDLSSKVNAGELVGAMAQQVGGKGGGRADMAMAGGSEPQNLDNALKFAEEWIQAKL</sequence>
<feature type="chain" id="PRO_0000347478" description="Alanine--tRNA ligase">
    <location>
        <begin position="1"/>
        <end position="874"/>
    </location>
</feature>
<feature type="binding site" evidence="1">
    <location>
        <position position="563"/>
    </location>
    <ligand>
        <name>Zn(2+)</name>
        <dbReference type="ChEBI" id="CHEBI:29105"/>
    </ligand>
</feature>
<feature type="binding site" evidence="1">
    <location>
        <position position="567"/>
    </location>
    <ligand>
        <name>Zn(2+)</name>
        <dbReference type="ChEBI" id="CHEBI:29105"/>
    </ligand>
</feature>
<feature type="binding site" evidence="1">
    <location>
        <position position="665"/>
    </location>
    <ligand>
        <name>Zn(2+)</name>
        <dbReference type="ChEBI" id="CHEBI:29105"/>
    </ligand>
</feature>
<feature type="binding site" evidence="1">
    <location>
        <position position="669"/>
    </location>
    <ligand>
        <name>Zn(2+)</name>
        <dbReference type="ChEBI" id="CHEBI:29105"/>
    </ligand>
</feature>
<accession>B3H177</accession>
<proteinExistence type="inferred from homology"/>
<name>SYA_ACTP7</name>
<comment type="function">
    <text evidence="1">Catalyzes the attachment of alanine to tRNA(Ala) in a two-step reaction: alanine is first activated by ATP to form Ala-AMP and then transferred to the acceptor end of tRNA(Ala). Also edits incorrectly charged Ser-tRNA(Ala) and Gly-tRNA(Ala) via its editing domain.</text>
</comment>
<comment type="catalytic activity">
    <reaction evidence="1">
        <text>tRNA(Ala) + L-alanine + ATP = L-alanyl-tRNA(Ala) + AMP + diphosphate</text>
        <dbReference type="Rhea" id="RHEA:12540"/>
        <dbReference type="Rhea" id="RHEA-COMP:9657"/>
        <dbReference type="Rhea" id="RHEA-COMP:9923"/>
        <dbReference type="ChEBI" id="CHEBI:30616"/>
        <dbReference type="ChEBI" id="CHEBI:33019"/>
        <dbReference type="ChEBI" id="CHEBI:57972"/>
        <dbReference type="ChEBI" id="CHEBI:78442"/>
        <dbReference type="ChEBI" id="CHEBI:78497"/>
        <dbReference type="ChEBI" id="CHEBI:456215"/>
        <dbReference type="EC" id="6.1.1.7"/>
    </reaction>
</comment>
<comment type="cofactor">
    <cofactor evidence="1">
        <name>Zn(2+)</name>
        <dbReference type="ChEBI" id="CHEBI:29105"/>
    </cofactor>
    <text evidence="1">Binds 1 zinc ion per subunit.</text>
</comment>
<comment type="subcellular location">
    <subcellularLocation>
        <location evidence="1">Cytoplasm</location>
    </subcellularLocation>
</comment>
<comment type="domain">
    <text evidence="1">Consists of three domains; the N-terminal catalytic domain, the editing domain and the C-terminal C-Ala domain. The editing domain removes incorrectly charged amino acids, while the C-Ala domain, along with tRNA(Ala), serves as a bridge to cooperatively bring together the editing and aminoacylation centers thus stimulating deacylation of misacylated tRNAs.</text>
</comment>
<comment type="similarity">
    <text evidence="1">Belongs to the class-II aminoacyl-tRNA synthetase family.</text>
</comment>